<evidence type="ECO:0000255" key="1">
    <source>
        <dbReference type="HAMAP-Rule" id="MF_00164"/>
    </source>
</evidence>
<evidence type="ECO:0000305" key="2"/>
<reference key="1">
    <citation type="journal article" date="1995" name="Mol. Microbiol.">
        <title>glmS of Thermus thermophilus HB8: an essential gene for cell-wall synthesis identified immediately upstream of the S-layer gene.</title>
        <authorList>
            <person name="Fernandez-Herrero L.A."/>
            <person name="Badet-Denisot M.-A."/>
            <person name="Badet B."/>
            <person name="Berenguer J."/>
        </authorList>
    </citation>
    <scope>NUCLEOTIDE SEQUENCE [GENOMIC DNA]</scope>
</reference>
<reference key="2">
    <citation type="submission" date="2004-11" db="EMBL/GenBank/DDBJ databases">
        <title>Complete genome sequence of Thermus thermophilus HB8.</title>
        <authorList>
            <person name="Masui R."/>
            <person name="Kurokawa K."/>
            <person name="Nakagawa N."/>
            <person name="Tokunaga F."/>
            <person name="Koyama Y."/>
            <person name="Shibata T."/>
            <person name="Oshima T."/>
            <person name="Yokoyama S."/>
            <person name="Yasunaga T."/>
            <person name="Kuramitsu S."/>
        </authorList>
    </citation>
    <scope>NUCLEOTIDE SEQUENCE [LARGE SCALE GENOMIC DNA]</scope>
    <source>
        <strain>ATCC 27634 / DSM 579 / HB8</strain>
    </source>
</reference>
<dbReference type="EC" id="2.6.1.16" evidence="1"/>
<dbReference type="EMBL" id="U17352">
    <property type="protein sequence ID" value="AAA86988.1"/>
    <property type="molecule type" value="Genomic_DNA"/>
</dbReference>
<dbReference type="EMBL" id="AP008226">
    <property type="protein sequence ID" value="BAD71719.1"/>
    <property type="molecule type" value="Genomic_DNA"/>
</dbReference>
<dbReference type="RefSeq" id="WP_011228994.1">
    <property type="nucleotide sequence ID" value="NC_006461.1"/>
</dbReference>
<dbReference type="RefSeq" id="YP_145162.1">
    <property type="nucleotide sequence ID" value="NC_006461.1"/>
</dbReference>
<dbReference type="SMR" id="Q56213"/>
<dbReference type="EnsemblBacteria" id="BAD71719">
    <property type="protein sequence ID" value="BAD71719"/>
    <property type="gene ID" value="BAD71719"/>
</dbReference>
<dbReference type="GeneID" id="3168001"/>
<dbReference type="KEGG" id="ttj:TTHA1896"/>
<dbReference type="PATRIC" id="fig|300852.9.peg.1864"/>
<dbReference type="eggNOG" id="COG0449">
    <property type="taxonomic scope" value="Bacteria"/>
</dbReference>
<dbReference type="HOGENOM" id="CLU_012520_5_2_0"/>
<dbReference type="PhylomeDB" id="Q56213"/>
<dbReference type="Proteomes" id="UP000000532">
    <property type="component" value="Chromosome"/>
</dbReference>
<dbReference type="GO" id="GO:0005829">
    <property type="term" value="C:cytosol"/>
    <property type="evidence" value="ECO:0007669"/>
    <property type="project" value="TreeGrafter"/>
</dbReference>
<dbReference type="GO" id="GO:0097367">
    <property type="term" value="F:carbohydrate derivative binding"/>
    <property type="evidence" value="ECO:0007669"/>
    <property type="project" value="InterPro"/>
</dbReference>
<dbReference type="GO" id="GO:0004360">
    <property type="term" value="F:glutamine-fructose-6-phosphate transaminase (isomerizing) activity"/>
    <property type="evidence" value="ECO:0007669"/>
    <property type="project" value="UniProtKB-UniRule"/>
</dbReference>
<dbReference type="GO" id="GO:0005975">
    <property type="term" value="P:carbohydrate metabolic process"/>
    <property type="evidence" value="ECO:0007669"/>
    <property type="project" value="UniProtKB-UniRule"/>
</dbReference>
<dbReference type="GO" id="GO:0006002">
    <property type="term" value="P:fructose 6-phosphate metabolic process"/>
    <property type="evidence" value="ECO:0007669"/>
    <property type="project" value="TreeGrafter"/>
</dbReference>
<dbReference type="GO" id="GO:0006487">
    <property type="term" value="P:protein N-linked glycosylation"/>
    <property type="evidence" value="ECO:0007669"/>
    <property type="project" value="TreeGrafter"/>
</dbReference>
<dbReference type="GO" id="GO:0006047">
    <property type="term" value="P:UDP-N-acetylglucosamine metabolic process"/>
    <property type="evidence" value="ECO:0007669"/>
    <property type="project" value="TreeGrafter"/>
</dbReference>
<dbReference type="CDD" id="cd00714">
    <property type="entry name" value="GFAT"/>
    <property type="match status" value="1"/>
</dbReference>
<dbReference type="CDD" id="cd05008">
    <property type="entry name" value="SIS_GlmS_GlmD_1"/>
    <property type="match status" value="1"/>
</dbReference>
<dbReference type="CDD" id="cd05009">
    <property type="entry name" value="SIS_GlmS_GlmD_2"/>
    <property type="match status" value="1"/>
</dbReference>
<dbReference type="FunFam" id="3.40.50.10490:FF:000001">
    <property type="entry name" value="Glutamine--fructose-6-phosphate aminotransferase [isomerizing]"/>
    <property type="match status" value="1"/>
</dbReference>
<dbReference type="FunFam" id="3.60.20.10:FF:000006">
    <property type="entry name" value="Glutamine--fructose-6-phosphate aminotransferase [isomerizing]"/>
    <property type="match status" value="1"/>
</dbReference>
<dbReference type="Gene3D" id="3.40.50.10490">
    <property type="entry name" value="Glucose-6-phosphate isomerase like protein, domain 1"/>
    <property type="match status" value="2"/>
</dbReference>
<dbReference type="Gene3D" id="3.60.20.10">
    <property type="entry name" value="Glutamine Phosphoribosylpyrophosphate, subunit 1, domain 1"/>
    <property type="match status" value="1"/>
</dbReference>
<dbReference type="HAMAP" id="MF_00164">
    <property type="entry name" value="GlmS"/>
    <property type="match status" value="1"/>
</dbReference>
<dbReference type="InterPro" id="IPR017932">
    <property type="entry name" value="GATase_2_dom"/>
</dbReference>
<dbReference type="InterPro" id="IPR005855">
    <property type="entry name" value="GFAT"/>
</dbReference>
<dbReference type="InterPro" id="IPR047084">
    <property type="entry name" value="GFAT_N"/>
</dbReference>
<dbReference type="InterPro" id="IPR035466">
    <property type="entry name" value="GlmS/AgaS_SIS"/>
</dbReference>
<dbReference type="InterPro" id="IPR035490">
    <property type="entry name" value="GlmS/FrlB_SIS"/>
</dbReference>
<dbReference type="InterPro" id="IPR029055">
    <property type="entry name" value="Ntn_hydrolases_N"/>
</dbReference>
<dbReference type="InterPro" id="IPR001347">
    <property type="entry name" value="SIS_dom"/>
</dbReference>
<dbReference type="InterPro" id="IPR046348">
    <property type="entry name" value="SIS_dom_sf"/>
</dbReference>
<dbReference type="NCBIfam" id="TIGR01135">
    <property type="entry name" value="glmS"/>
    <property type="match status" value="1"/>
</dbReference>
<dbReference type="NCBIfam" id="NF001484">
    <property type="entry name" value="PRK00331.1"/>
    <property type="match status" value="1"/>
</dbReference>
<dbReference type="PANTHER" id="PTHR10937">
    <property type="entry name" value="GLUCOSAMINE--FRUCTOSE-6-PHOSPHATE AMINOTRANSFERASE, ISOMERIZING"/>
    <property type="match status" value="1"/>
</dbReference>
<dbReference type="PANTHER" id="PTHR10937:SF0">
    <property type="entry name" value="GLUTAMINE--FRUCTOSE-6-PHOSPHATE TRANSAMINASE (ISOMERIZING)"/>
    <property type="match status" value="1"/>
</dbReference>
<dbReference type="Pfam" id="PF13522">
    <property type="entry name" value="GATase_6"/>
    <property type="match status" value="1"/>
</dbReference>
<dbReference type="Pfam" id="PF01380">
    <property type="entry name" value="SIS"/>
    <property type="match status" value="2"/>
</dbReference>
<dbReference type="SUPFAM" id="SSF56235">
    <property type="entry name" value="N-terminal nucleophile aminohydrolases (Ntn hydrolases)"/>
    <property type="match status" value="1"/>
</dbReference>
<dbReference type="SUPFAM" id="SSF53697">
    <property type="entry name" value="SIS domain"/>
    <property type="match status" value="1"/>
</dbReference>
<dbReference type="PROSITE" id="PS51278">
    <property type="entry name" value="GATASE_TYPE_2"/>
    <property type="match status" value="1"/>
</dbReference>
<dbReference type="PROSITE" id="PS51464">
    <property type="entry name" value="SIS"/>
    <property type="match status" value="2"/>
</dbReference>
<comment type="function">
    <text>Catalyzes the first step in hexosamine metabolism, converting fructose-6P into glucosamine-6P using glutamine as a nitrogen source.</text>
</comment>
<comment type="catalytic activity">
    <reaction evidence="1">
        <text>D-fructose 6-phosphate + L-glutamine = D-glucosamine 6-phosphate + L-glutamate</text>
        <dbReference type="Rhea" id="RHEA:13237"/>
        <dbReference type="ChEBI" id="CHEBI:29985"/>
        <dbReference type="ChEBI" id="CHEBI:58359"/>
        <dbReference type="ChEBI" id="CHEBI:58725"/>
        <dbReference type="ChEBI" id="CHEBI:61527"/>
        <dbReference type="EC" id="2.6.1.16"/>
    </reaction>
</comment>
<comment type="subunit">
    <text>Homodimer.</text>
</comment>
<comment type="subcellular location">
    <subcellularLocation>
        <location>Cytoplasm</location>
    </subcellularLocation>
</comment>
<feature type="initiator methionine" description="Removed" evidence="1">
    <location>
        <position position="1"/>
    </location>
</feature>
<feature type="chain" id="PRO_0000135402" description="Glutamine--fructose-6-phosphate aminotransferase [isomerizing]">
    <location>
        <begin position="2"/>
        <end position="604"/>
    </location>
</feature>
<feature type="domain" description="Glutamine amidotransferase type-2" evidence="1">
    <location>
        <begin position="2"/>
        <end position="216"/>
    </location>
</feature>
<feature type="domain" description="SIS 1" evidence="1">
    <location>
        <begin position="281"/>
        <end position="420"/>
    </location>
</feature>
<feature type="domain" description="SIS 2" evidence="1">
    <location>
        <begin position="453"/>
        <end position="594"/>
    </location>
</feature>
<feature type="active site" description="Nucleophile; for GATase activity" evidence="1">
    <location>
        <position position="2"/>
    </location>
</feature>
<feature type="active site" description="For Fru-6P isomerization activity" evidence="1">
    <location>
        <position position="599"/>
    </location>
</feature>
<feature type="sequence conflict" description="In Ref. 1; AAA86988." evidence="2" ref="1">
    <original>A</original>
    <variation>S</variation>
    <location>
        <position position="53"/>
    </location>
</feature>
<feature type="sequence conflict" description="In Ref. 1; AAA86988." evidence="2" ref="1">
    <original>L</original>
    <variation>I</variation>
    <location>
        <position position="203"/>
    </location>
</feature>
<feature type="sequence conflict" description="In Ref. 1; AAA86988." evidence="2" ref="1">
    <original>V</original>
    <variation>I</variation>
    <location>
        <position position="412"/>
    </location>
</feature>
<feature type="sequence conflict" description="In Ref. 1; AAA86988." evidence="2" ref="1">
    <original>G</original>
    <variation>A</variation>
    <location>
        <position position="417"/>
    </location>
</feature>
<feature type="sequence conflict" description="In Ref. 1; AAA86988." evidence="2" ref="1">
    <original>L</original>
    <variation>P</variation>
    <location>
        <position position="423"/>
    </location>
</feature>
<feature type="sequence conflict" description="In Ref. 1; AAA86988." evidence="2" ref="1">
    <original>R</original>
    <variation>Q</variation>
    <location>
        <position position="461"/>
    </location>
</feature>
<protein>
    <recommendedName>
        <fullName evidence="1">Glutamine--fructose-6-phosphate aminotransferase [isomerizing]</fullName>
        <ecNumber evidence="1">2.6.1.16</ecNumber>
    </recommendedName>
    <alternativeName>
        <fullName evidence="1">D-fructose-6-phosphate amidotransferase</fullName>
    </alternativeName>
    <alternativeName>
        <fullName evidence="1">GFAT</fullName>
    </alternativeName>
    <alternativeName>
        <fullName evidence="1">Glucosamine-6-phosphate synthase</fullName>
    </alternativeName>
    <alternativeName>
        <fullName evidence="1">Hexosephosphate aminotransferase</fullName>
    </alternativeName>
    <alternativeName>
        <fullName evidence="1">L-glutamine--D-fructose-6-phosphate amidotransferase</fullName>
    </alternativeName>
</protein>
<gene>
    <name evidence="1" type="primary">glmS</name>
    <name type="ordered locus">TTHA1896</name>
</gene>
<keyword id="KW-0032">Aminotransferase</keyword>
<keyword id="KW-0963">Cytoplasm</keyword>
<keyword id="KW-0315">Glutamine amidotransferase</keyword>
<keyword id="KW-1185">Reference proteome</keyword>
<keyword id="KW-0677">Repeat</keyword>
<keyword id="KW-0808">Transferase</keyword>
<sequence>MCGIVGYVGFRNATDVLLDGLRRLEYRGYDSAGIAVRTPEGLKVVKRSGKLSALAEAVGKTPLQGALGIGHTRWATHGAPTDPNAHPHTTEDGRIALIHNGIFENYLELKEALEARGHRFRSETDTEVLAHLLEETYRGDLLEALREALKAVRGAYAVVVAHEDHEEIVAARTVSPLVVGLGEGENFLASDVPALLPYTRRVLFLHDGDVVRLTREGVEITDLEGRPVQREAVEVDWTLEAAEKGGFPHYMLKEIYEQPWVLENTLGGRLREEEGTVELGLALDPREVDRVHVIACGTASYAGLYGKYLLETLARLPTEWDVASEYRYRDPVVDSRTLALAISQSGETIDTLEGLREAKRKGARSLGVINAKGSTLTREVEDVLYIHAGPEIGVASTKAYTAMLAAMALLAVWFGRGRGALALEEAQRLLREMRRLPRLVEEVLEKRPLVAHVAEKYHQARDFLFLGRHVQAPTAYEGALKLKEISYIHAEAYPAGEMKHGPIALIDEHLPVVVLATKGPLYEKTLSNIQEVRARGGKVIAIATEGDEEIPRLAQDVIYVPEVHPLLAPIVSVVPLQLLAYEIAVLLGRDVDQPRNLAKSVTVE</sequence>
<accession>Q56213</accession>
<accession>Q5SH34</accession>
<proteinExistence type="inferred from homology"/>
<name>GLMS_THET8</name>
<organism>
    <name type="scientific">Thermus thermophilus (strain ATCC 27634 / DSM 579 / HB8)</name>
    <dbReference type="NCBI Taxonomy" id="300852"/>
    <lineage>
        <taxon>Bacteria</taxon>
        <taxon>Thermotogati</taxon>
        <taxon>Deinococcota</taxon>
        <taxon>Deinococci</taxon>
        <taxon>Thermales</taxon>
        <taxon>Thermaceae</taxon>
        <taxon>Thermus</taxon>
    </lineage>
</organism>